<gene>
    <name evidence="1" type="primary">prfC</name>
    <name type="ordered locus">str1574</name>
</gene>
<protein>
    <recommendedName>
        <fullName evidence="1">Peptide chain release factor 3</fullName>
        <shortName evidence="1">RF-3</shortName>
    </recommendedName>
</protein>
<reference key="1">
    <citation type="journal article" date="2004" name="Nat. Biotechnol.">
        <title>Complete sequence and comparative genome analysis of the dairy bacterium Streptococcus thermophilus.</title>
        <authorList>
            <person name="Bolotin A."/>
            <person name="Quinquis B."/>
            <person name="Renault P."/>
            <person name="Sorokin A."/>
            <person name="Ehrlich S.D."/>
            <person name="Kulakauskas S."/>
            <person name="Lapidus A."/>
            <person name="Goltsman E."/>
            <person name="Mazur M."/>
            <person name="Pusch G.D."/>
            <person name="Fonstein M."/>
            <person name="Overbeek R."/>
            <person name="Kyprides N."/>
            <person name="Purnelle B."/>
            <person name="Prozzi D."/>
            <person name="Ngui K."/>
            <person name="Masuy D."/>
            <person name="Hancy F."/>
            <person name="Burteau S."/>
            <person name="Boutry M."/>
            <person name="Delcour J."/>
            <person name="Goffeau A."/>
            <person name="Hols P."/>
        </authorList>
    </citation>
    <scope>NUCLEOTIDE SEQUENCE [LARGE SCALE GENOMIC DNA]</scope>
    <source>
        <strain>CNRZ 1066</strain>
    </source>
</reference>
<evidence type="ECO:0000255" key="1">
    <source>
        <dbReference type="HAMAP-Rule" id="MF_00072"/>
    </source>
</evidence>
<keyword id="KW-0963">Cytoplasm</keyword>
<keyword id="KW-0342">GTP-binding</keyword>
<keyword id="KW-0547">Nucleotide-binding</keyword>
<keyword id="KW-0648">Protein biosynthesis</keyword>
<accession>Q5LYK1</accession>
<dbReference type="EMBL" id="CP000024">
    <property type="protein sequence ID" value="AAV63104.1"/>
    <property type="molecule type" value="Genomic_DNA"/>
</dbReference>
<dbReference type="RefSeq" id="WP_011226410.1">
    <property type="nucleotide sequence ID" value="NC_006449.1"/>
</dbReference>
<dbReference type="SMR" id="Q5LYK1"/>
<dbReference type="KEGG" id="stc:str1574"/>
<dbReference type="HOGENOM" id="CLU_002794_2_1_9"/>
<dbReference type="GO" id="GO:0005829">
    <property type="term" value="C:cytosol"/>
    <property type="evidence" value="ECO:0007669"/>
    <property type="project" value="TreeGrafter"/>
</dbReference>
<dbReference type="GO" id="GO:0005525">
    <property type="term" value="F:GTP binding"/>
    <property type="evidence" value="ECO:0007669"/>
    <property type="project" value="UniProtKB-UniRule"/>
</dbReference>
<dbReference type="GO" id="GO:0003924">
    <property type="term" value="F:GTPase activity"/>
    <property type="evidence" value="ECO:0007669"/>
    <property type="project" value="InterPro"/>
</dbReference>
<dbReference type="GO" id="GO:0016150">
    <property type="term" value="F:translation release factor activity, codon nonspecific"/>
    <property type="evidence" value="ECO:0007669"/>
    <property type="project" value="TreeGrafter"/>
</dbReference>
<dbReference type="GO" id="GO:0016149">
    <property type="term" value="F:translation release factor activity, codon specific"/>
    <property type="evidence" value="ECO:0007669"/>
    <property type="project" value="UniProtKB-UniRule"/>
</dbReference>
<dbReference type="GO" id="GO:0006449">
    <property type="term" value="P:regulation of translational termination"/>
    <property type="evidence" value="ECO:0007669"/>
    <property type="project" value="UniProtKB-UniRule"/>
</dbReference>
<dbReference type="CDD" id="cd04169">
    <property type="entry name" value="RF3"/>
    <property type="match status" value="1"/>
</dbReference>
<dbReference type="CDD" id="cd16259">
    <property type="entry name" value="RF3_III"/>
    <property type="match status" value="1"/>
</dbReference>
<dbReference type="FunFam" id="2.40.30.10:FF:000040">
    <property type="entry name" value="Peptide chain release factor 3"/>
    <property type="match status" value="1"/>
</dbReference>
<dbReference type="FunFam" id="3.30.70.3280:FF:000001">
    <property type="entry name" value="Peptide chain release factor 3"/>
    <property type="match status" value="1"/>
</dbReference>
<dbReference type="FunFam" id="3.40.50.300:FF:000542">
    <property type="entry name" value="Peptide chain release factor 3"/>
    <property type="match status" value="1"/>
</dbReference>
<dbReference type="Gene3D" id="3.40.50.300">
    <property type="entry name" value="P-loop containing nucleotide triphosphate hydrolases"/>
    <property type="match status" value="1"/>
</dbReference>
<dbReference type="Gene3D" id="3.30.70.3280">
    <property type="entry name" value="Peptide chain release factor 3, domain III"/>
    <property type="match status" value="1"/>
</dbReference>
<dbReference type="Gene3D" id="2.40.30.10">
    <property type="entry name" value="Translation factors"/>
    <property type="match status" value="1"/>
</dbReference>
<dbReference type="HAMAP" id="MF_00072">
    <property type="entry name" value="Rel_fac_3"/>
    <property type="match status" value="1"/>
</dbReference>
<dbReference type="InterPro" id="IPR053905">
    <property type="entry name" value="EF-G-like_DII"/>
</dbReference>
<dbReference type="InterPro" id="IPR035647">
    <property type="entry name" value="EFG_III/V"/>
</dbReference>
<dbReference type="InterPro" id="IPR031157">
    <property type="entry name" value="G_TR_CS"/>
</dbReference>
<dbReference type="InterPro" id="IPR027417">
    <property type="entry name" value="P-loop_NTPase"/>
</dbReference>
<dbReference type="InterPro" id="IPR004548">
    <property type="entry name" value="PrfC"/>
</dbReference>
<dbReference type="InterPro" id="IPR032090">
    <property type="entry name" value="RF3_C"/>
</dbReference>
<dbReference type="InterPro" id="IPR038467">
    <property type="entry name" value="RF3_dom_3_sf"/>
</dbReference>
<dbReference type="InterPro" id="IPR041732">
    <property type="entry name" value="RF3_GTP-bd"/>
</dbReference>
<dbReference type="InterPro" id="IPR005225">
    <property type="entry name" value="Small_GTP-bd"/>
</dbReference>
<dbReference type="InterPro" id="IPR000795">
    <property type="entry name" value="T_Tr_GTP-bd_dom"/>
</dbReference>
<dbReference type="InterPro" id="IPR009000">
    <property type="entry name" value="Transl_B-barrel_sf"/>
</dbReference>
<dbReference type="NCBIfam" id="TIGR00503">
    <property type="entry name" value="prfC"/>
    <property type="match status" value="1"/>
</dbReference>
<dbReference type="NCBIfam" id="NF001964">
    <property type="entry name" value="PRK00741.1"/>
    <property type="match status" value="1"/>
</dbReference>
<dbReference type="NCBIfam" id="TIGR00231">
    <property type="entry name" value="small_GTP"/>
    <property type="match status" value="1"/>
</dbReference>
<dbReference type="PANTHER" id="PTHR43556">
    <property type="entry name" value="PEPTIDE CHAIN RELEASE FACTOR RF3"/>
    <property type="match status" value="1"/>
</dbReference>
<dbReference type="PANTHER" id="PTHR43556:SF2">
    <property type="entry name" value="PEPTIDE CHAIN RELEASE FACTOR RF3"/>
    <property type="match status" value="1"/>
</dbReference>
<dbReference type="Pfam" id="PF22042">
    <property type="entry name" value="EF-G_D2"/>
    <property type="match status" value="1"/>
</dbReference>
<dbReference type="Pfam" id="PF00009">
    <property type="entry name" value="GTP_EFTU"/>
    <property type="match status" value="1"/>
</dbReference>
<dbReference type="Pfam" id="PF16658">
    <property type="entry name" value="RF3_C"/>
    <property type="match status" value="1"/>
</dbReference>
<dbReference type="PRINTS" id="PR00315">
    <property type="entry name" value="ELONGATNFCT"/>
</dbReference>
<dbReference type="PRINTS" id="PR01037">
    <property type="entry name" value="TCRTETOQM"/>
</dbReference>
<dbReference type="SUPFAM" id="SSF54980">
    <property type="entry name" value="EF-G C-terminal domain-like"/>
    <property type="match status" value="1"/>
</dbReference>
<dbReference type="SUPFAM" id="SSF52540">
    <property type="entry name" value="P-loop containing nucleoside triphosphate hydrolases"/>
    <property type="match status" value="1"/>
</dbReference>
<dbReference type="SUPFAM" id="SSF50447">
    <property type="entry name" value="Translation proteins"/>
    <property type="match status" value="1"/>
</dbReference>
<dbReference type="PROSITE" id="PS00301">
    <property type="entry name" value="G_TR_1"/>
    <property type="match status" value="1"/>
</dbReference>
<dbReference type="PROSITE" id="PS51722">
    <property type="entry name" value="G_TR_2"/>
    <property type="match status" value="1"/>
</dbReference>
<proteinExistence type="inferred from homology"/>
<organism>
    <name type="scientific">Streptococcus thermophilus (strain CNRZ 1066)</name>
    <dbReference type="NCBI Taxonomy" id="299768"/>
    <lineage>
        <taxon>Bacteria</taxon>
        <taxon>Bacillati</taxon>
        <taxon>Bacillota</taxon>
        <taxon>Bacilli</taxon>
        <taxon>Lactobacillales</taxon>
        <taxon>Streptococcaceae</taxon>
        <taxon>Streptococcus</taxon>
    </lineage>
</organism>
<sequence>MSIRDEIKKRRTFAIISHPDAGKTTITEQLLYFGGEIREAGTVKGKKTGNFAKSDWMDIEKQRGISVTSSVMQFDYAGKRVNILDTPGHEDFSEDTYRTLMAVDAAVMVVDSAKGIEAQTKKLFEVVKHRGIPVFTFMNKLDRDGREPLDLLEELEEVLGIASYPMNWPIGMGKAFEGLYDLYNERLELYKGNERFAKIEDGDTLFANNPFYEQTKEDIELLTEAGNEFSEEAILAGELTPVFFGSALTNFGVQTFLDTFLKFAPEPHGHKTVDGDEIDPLNKDFSGFVFKIQANMDPRHRDRIAFVRIVSGEFERGMSVNLTRTGKGAKLSNVTQFMAESRENVENAVAGDIIGVYDTGTYQVGDTLTVGKNKFEFEPLPTFTPELFMKVSAKNVMKQKSFHKGIEQLVQEGAIQLYTNYQTGEYMLGAVGQLQFEVFKHRMENEYNAEVVMTPMGKKTVRWIQPEDLDERMSSSRNILAKDRFDQPVFLFENDFALRWFADKYPDVTLEEKM</sequence>
<name>RF3_STRT1</name>
<comment type="function">
    <text evidence="1">Increases the formation of ribosomal termination complexes and stimulates activities of RF-1 and RF-2. It binds guanine nucleotides and has strong preference for UGA stop codons. It may interact directly with the ribosome. The stimulation of RF-1 and RF-2 is significantly reduced by GTP and GDP, but not by GMP.</text>
</comment>
<comment type="subcellular location">
    <subcellularLocation>
        <location evidence="1">Cytoplasm</location>
    </subcellularLocation>
</comment>
<comment type="similarity">
    <text evidence="1">Belongs to the TRAFAC class translation factor GTPase superfamily. Classic translation factor GTPase family. PrfC subfamily.</text>
</comment>
<feature type="chain" id="PRO_0000242218" description="Peptide chain release factor 3">
    <location>
        <begin position="1"/>
        <end position="514"/>
    </location>
</feature>
<feature type="domain" description="tr-type G">
    <location>
        <begin position="8"/>
        <end position="268"/>
    </location>
</feature>
<feature type="binding site" evidence="1">
    <location>
        <begin position="17"/>
        <end position="24"/>
    </location>
    <ligand>
        <name>GTP</name>
        <dbReference type="ChEBI" id="CHEBI:37565"/>
    </ligand>
</feature>
<feature type="binding site" evidence="1">
    <location>
        <begin position="85"/>
        <end position="89"/>
    </location>
    <ligand>
        <name>GTP</name>
        <dbReference type="ChEBI" id="CHEBI:37565"/>
    </ligand>
</feature>
<feature type="binding site" evidence="1">
    <location>
        <begin position="139"/>
        <end position="142"/>
    </location>
    <ligand>
        <name>GTP</name>
        <dbReference type="ChEBI" id="CHEBI:37565"/>
    </ligand>
</feature>